<proteinExistence type="inferred from homology"/>
<feature type="chain" id="PRO_0000131743" description="Protein translocase subunit SecY">
    <location>
        <begin position="1"/>
        <end position="430"/>
    </location>
</feature>
<feature type="transmembrane region" description="Helical" evidence="1">
    <location>
        <begin position="18"/>
        <end position="38"/>
    </location>
</feature>
<feature type="transmembrane region" description="Helical" evidence="1">
    <location>
        <begin position="68"/>
        <end position="88"/>
    </location>
</feature>
<feature type="transmembrane region" description="Helical" evidence="1">
    <location>
        <begin position="117"/>
        <end position="137"/>
    </location>
</feature>
<feature type="transmembrane region" description="Helical" evidence="1">
    <location>
        <begin position="147"/>
        <end position="167"/>
    </location>
</feature>
<feature type="transmembrane region" description="Helical" evidence="1">
    <location>
        <begin position="179"/>
        <end position="199"/>
    </location>
</feature>
<feature type="transmembrane region" description="Helical" evidence="1">
    <location>
        <begin position="217"/>
        <end position="237"/>
    </location>
</feature>
<feature type="transmembrane region" description="Helical" evidence="1">
    <location>
        <begin position="269"/>
        <end position="289"/>
    </location>
</feature>
<feature type="transmembrane region" description="Helical" evidence="1">
    <location>
        <begin position="308"/>
        <end position="328"/>
    </location>
</feature>
<feature type="transmembrane region" description="Helical" evidence="1">
    <location>
        <begin position="368"/>
        <end position="388"/>
    </location>
</feature>
<feature type="transmembrane region" description="Helical" evidence="1">
    <location>
        <begin position="389"/>
        <end position="409"/>
    </location>
</feature>
<reference key="1">
    <citation type="journal article" date="2004" name="Proc. Natl. Acad. Sci. U.S.A.">
        <title>Complete genomes of two clinical Staphylococcus aureus strains: evidence for the rapid evolution of virulence and drug resistance.</title>
        <authorList>
            <person name="Holden M.T.G."/>
            <person name="Feil E.J."/>
            <person name="Lindsay J.A."/>
            <person name="Peacock S.J."/>
            <person name="Day N.P.J."/>
            <person name="Enright M.C."/>
            <person name="Foster T.J."/>
            <person name="Moore C.E."/>
            <person name="Hurst L."/>
            <person name="Atkin R."/>
            <person name="Barron A."/>
            <person name="Bason N."/>
            <person name="Bentley S.D."/>
            <person name="Chillingworth C."/>
            <person name="Chillingworth T."/>
            <person name="Churcher C."/>
            <person name="Clark L."/>
            <person name="Corton C."/>
            <person name="Cronin A."/>
            <person name="Doggett J."/>
            <person name="Dowd L."/>
            <person name="Feltwell T."/>
            <person name="Hance Z."/>
            <person name="Harris B."/>
            <person name="Hauser H."/>
            <person name="Holroyd S."/>
            <person name="Jagels K."/>
            <person name="James K.D."/>
            <person name="Lennard N."/>
            <person name="Line A."/>
            <person name="Mayes R."/>
            <person name="Moule S."/>
            <person name="Mungall K."/>
            <person name="Ormond D."/>
            <person name="Quail M.A."/>
            <person name="Rabbinowitsch E."/>
            <person name="Rutherford K.M."/>
            <person name="Sanders M."/>
            <person name="Sharp S."/>
            <person name="Simmonds M."/>
            <person name="Stevens K."/>
            <person name="Whitehead S."/>
            <person name="Barrell B.G."/>
            <person name="Spratt B.G."/>
            <person name="Parkhill J."/>
        </authorList>
    </citation>
    <scope>NUCLEOTIDE SEQUENCE [LARGE SCALE GENOMIC DNA]</scope>
    <source>
        <strain>MRSA252</strain>
    </source>
</reference>
<gene>
    <name evidence="1" type="primary">secY</name>
    <name type="ordered locus">SAR2315</name>
</gene>
<accession>Q6GEK3</accession>
<name>SECY_STAAR</name>
<dbReference type="EMBL" id="BX571856">
    <property type="protein sequence ID" value="CAG41296.1"/>
    <property type="molecule type" value="Genomic_DNA"/>
</dbReference>
<dbReference type="RefSeq" id="WP_000616784.1">
    <property type="nucleotide sequence ID" value="NC_002952.2"/>
</dbReference>
<dbReference type="SMR" id="Q6GEK3"/>
<dbReference type="KEGG" id="sar:SAR2315"/>
<dbReference type="HOGENOM" id="CLU_030313_0_1_9"/>
<dbReference type="Proteomes" id="UP000000596">
    <property type="component" value="Chromosome"/>
</dbReference>
<dbReference type="GO" id="GO:0005886">
    <property type="term" value="C:plasma membrane"/>
    <property type="evidence" value="ECO:0007669"/>
    <property type="project" value="UniProtKB-SubCell"/>
</dbReference>
<dbReference type="GO" id="GO:0065002">
    <property type="term" value="P:intracellular protein transmembrane transport"/>
    <property type="evidence" value="ECO:0007669"/>
    <property type="project" value="UniProtKB-UniRule"/>
</dbReference>
<dbReference type="GO" id="GO:0006605">
    <property type="term" value="P:protein targeting"/>
    <property type="evidence" value="ECO:0007669"/>
    <property type="project" value="UniProtKB-UniRule"/>
</dbReference>
<dbReference type="GO" id="GO:0043952">
    <property type="term" value="P:protein transport by the Sec complex"/>
    <property type="evidence" value="ECO:0007669"/>
    <property type="project" value="UniProtKB-UniRule"/>
</dbReference>
<dbReference type="FunFam" id="1.10.3370.10:FF:000001">
    <property type="entry name" value="Preprotein translocase subunit SecY"/>
    <property type="match status" value="1"/>
</dbReference>
<dbReference type="Gene3D" id="1.10.3370.10">
    <property type="entry name" value="SecY subunit domain"/>
    <property type="match status" value="1"/>
</dbReference>
<dbReference type="HAMAP" id="MF_01465">
    <property type="entry name" value="SecY"/>
    <property type="match status" value="1"/>
</dbReference>
<dbReference type="InterPro" id="IPR026593">
    <property type="entry name" value="SecY"/>
</dbReference>
<dbReference type="InterPro" id="IPR002208">
    <property type="entry name" value="SecY/SEC61-alpha"/>
</dbReference>
<dbReference type="InterPro" id="IPR030659">
    <property type="entry name" value="SecY_CS"/>
</dbReference>
<dbReference type="InterPro" id="IPR023201">
    <property type="entry name" value="SecY_dom_sf"/>
</dbReference>
<dbReference type="NCBIfam" id="TIGR00967">
    <property type="entry name" value="3a0501s007"/>
    <property type="match status" value="1"/>
</dbReference>
<dbReference type="PANTHER" id="PTHR10906">
    <property type="entry name" value="SECY/SEC61-ALPHA FAMILY MEMBER"/>
    <property type="match status" value="1"/>
</dbReference>
<dbReference type="Pfam" id="PF00344">
    <property type="entry name" value="SecY"/>
    <property type="match status" value="1"/>
</dbReference>
<dbReference type="PIRSF" id="PIRSF004557">
    <property type="entry name" value="SecY"/>
    <property type="match status" value="1"/>
</dbReference>
<dbReference type="PRINTS" id="PR00303">
    <property type="entry name" value="SECYTRNLCASE"/>
</dbReference>
<dbReference type="SUPFAM" id="SSF103491">
    <property type="entry name" value="Preprotein translocase SecY subunit"/>
    <property type="match status" value="1"/>
</dbReference>
<dbReference type="PROSITE" id="PS00755">
    <property type="entry name" value="SECY_1"/>
    <property type="match status" value="1"/>
</dbReference>
<dbReference type="PROSITE" id="PS00756">
    <property type="entry name" value="SECY_2"/>
    <property type="match status" value="1"/>
</dbReference>
<protein>
    <recommendedName>
        <fullName evidence="1">Protein translocase subunit SecY</fullName>
    </recommendedName>
</protein>
<sequence length="430" mass="47148">MIQTLVNFFRTKEVRNKIFFTLAMLVIFKIGTYIPAPGVNPAAFDNPQGSQGATELLNTFGGGALKRFSIFAMGIVPYITASIVMQLLQMDIVPKFSEWAKQGEVGRRKLNNVTRYLAISLAFIQSIGMAFQFNNYLKGALIINQSIMSYLLIALVLTAGTAFLIWLGDQITQFGVGNGISIIIFAGILSTLPASLIQFGQTAFVGQEDTSLAWLKVLGLLVSLILLTVGAIYVLEAVRKIPIQYAKKQTAQRLGSQATYLPLKVNSAGVIPVIFAMAFFLLPRTLTLFYPDKEWAQNIANAANPSSNVGMVVYIVLIILFTYFYAFVQVNPEKMADNLKKQGSYVPGIRPGEQTKKYITKVLYRLTFVGSIFLAVISILPILATKFMGLPQSIQIGGTSLLIVIGVAIETMKSLEAQVSQKEYKGFGGR</sequence>
<evidence type="ECO:0000255" key="1">
    <source>
        <dbReference type="HAMAP-Rule" id="MF_01465"/>
    </source>
</evidence>
<comment type="function">
    <text evidence="1">The central subunit of the protein translocation channel SecYEG. Consists of two halves formed by TMs 1-5 and 6-10. These two domains form a lateral gate at the front which open onto the bilayer between TMs 2 and 7, and are clamped together by SecE at the back. The channel is closed by both a pore ring composed of hydrophobic SecY resides and a short helix (helix 2A) on the extracellular side of the membrane which forms a plug. The plug probably moves laterally to allow the channel to open. The ring and the pore may move independently.</text>
</comment>
<comment type="subunit">
    <text evidence="1">Component of the Sec protein translocase complex. Heterotrimer consisting of SecY, SecE and SecG subunits. The heterotrimers can form oligomers, although 1 heterotrimer is thought to be able to translocate proteins. Interacts with the ribosome. Interacts with SecDF, and other proteins may be involved. Interacts with SecA.</text>
</comment>
<comment type="subcellular location">
    <subcellularLocation>
        <location evidence="1">Cell membrane</location>
        <topology evidence="1">Multi-pass membrane protein</topology>
    </subcellularLocation>
</comment>
<comment type="similarity">
    <text evidence="1">Belongs to the SecY/SEC61-alpha family.</text>
</comment>
<keyword id="KW-1003">Cell membrane</keyword>
<keyword id="KW-0472">Membrane</keyword>
<keyword id="KW-0653">Protein transport</keyword>
<keyword id="KW-0811">Translocation</keyword>
<keyword id="KW-0812">Transmembrane</keyword>
<keyword id="KW-1133">Transmembrane helix</keyword>
<keyword id="KW-0813">Transport</keyword>
<organism>
    <name type="scientific">Staphylococcus aureus (strain MRSA252)</name>
    <dbReference type="NCBI Taxonomy" id="282458"/>
    <lineage>
        <taxon>Bacteria</taxon>
        <taxon>Bacillati</taxon>
        <taxon>Bacillota</taxon>
        <taxon>Bacilli</taxon>
        <taxon>Bacillales</taxon>
        <taxon>Staphylococcaceae</taxon>
        <taxon>Staphylococcus</taxon>
    </lineage>
</organism>